<evidence type="ECO:0000255" key="1">
    <source>
        <dbReference type="HAMAP-Rule" id="MF_00240"/>
    </source>
</evidence>
<proteinExistence type="inferred from homology"/>
<gene>
    <name evidence="1" type="primary">lolA</name>
    <name type="ordered locus">WIGBR4900</name>
</gene>
<protein>
    <recommendedName>
        <fullName evidence="1">Outer-membrane lipoprotein carrier protein</fullName>
    </recommendedName>
</protein>
<keyword id="KW-0143">Chaperone</keyword>
<keyword id="KW-0574">Periplasm</keyword>
<keyword id="KW-0653">Protein transport</keyword>
<keyword id="KW-1185">Reference proteome</keyword>
<keyword id="KW-0732">Signal</keyword>
<keyword id="KW-0813">Transport</keyword>
<feature type="signal peptide" evidence="1">
    <location>
        <begin position="1"/>
        <end position="20"/>
    </location>
</feature>
<feature type="chain" id="PRO_0000018283" description="Outer-membrane lipoprotein carrier protein">
    <location>
        <begin position="21"/>
        <end position="206"/>
    </location>
</feature>
<name>LOLA_WIGBR</name>
<accession>Q8D264</accession>
<sequence length="206" mass="24043">MFYLIKKLPKFILFSLYLYAFSSISDSSGILSERLNLINSFYSTVRQKVTSSSGDIVQESKGEIWIKKPNLFKSILFSPYENIASSDGNTLWLYDSETNQVTINWIKNIISDSPLYLIIKNNKNSWENFNIKNINDTFYIYSKKLNSSFRKITIIIDKKGILKNLIILSNTNYKTYYTFNIKKTIISSDFNFNFKIPKGAYIDDQR</sequence>
<reference key="1">
    <citation type="journal article" date="2002" name="Nat. Genet.">
        <title>Genome sequence of the endocellular obligate symbiont of tsetse flies, Wigglesworthia glossinidia.</title>
        <authorList>
            <person name="Akman L."/>
            <person name="Yamashita A."/>
            <person name="Watanabe H."/>
            <person name="Oshima K."/>
            <person name="Shiba T."/>
            <person name="Hattori M."/>
            <person name="Aksoy S."/>
        </authorList>
    </citation>
    <scope>NUCLEOTIDE SEQUENCE [LARGE SCALE GENOMIC DNA]</scope>
</reference>
<comment type="function">
    <text evidence="1">Participates in the translocation of lipoproteins from the inner membrane to the outer membrane. Only forms a complex with a lipoprotein if the residue after the N-terminal Cys is not an aspartate (The Asp acts as a targeting signal to indicate that the lipoprotein should stay in the inner membrane).</text>
</comment>
<comment type="subunit">
    <text evidence="1">Monomer.</text>
</comment>
<comment type="subcellular location">
    <subcellularLocation>
        <location evidence="1">Periplasm</location>
    </subcellularLocation>
</comment>
<comment type="similarity">
    <text evidence="1">Belongs to the LolA family.</text>
</comment>
<organism>
    <name type="scientific">Wigglesworthia glossinidia brevipalpis</name>
    <dbReference type="NCBI Taxonomy" id="36870"/>
    <lineage>
        <taxon>Bacteria</taxon>
        <taxon>Pseudomonadati</taxon>
        <taxon>Pseudomonadota</taxon>
        <taxon>Gammaproteobacteria</taxon>
        <taxon>Enterobacterales</taxon>
        <taxon>Erwiniaceae</taxon>
        <taxon>Wigglesworthia</taxon>
    </lineage>
</organism>
<dbReference type="EMBL" id="BA000021">
    <property type="protein sequence ID" value="BAC24636.1"/>
    <property type="molecule type" value="Genomic_DNA"/>
</dbReference>
<dbReference type="SMR" id="Q8D264"/>
<dbReference type="STRING" id="36870.gene:10368994"/>
<dbReference type="KEGG" id="wbr:lolA"/>
<dbReference type="eggNOG" id="COG2834">
    <property type="taxonomic scope" value="Bacteria"/>
</dbReference>
<dbReference type="HOGENOM" id="CLU_087560_1_1_6"/>
<dbReference type="OrthoDB" id="9787361at2"/>
<dbReference type="Proteomes" id="UP000000562">
    <property type="component" value="Chromosome"/>
</dbReference>
<dbReference type="GO" id="GO:0030288">
    <property type="term" value="C:outer membrane-bounded periplasmic space"/>
    <property type="evidence" value="ECO:0007669"/>
    <property type="project" value="TreeGrafter"/>
</dbReference>
<dbReference type="GO" id="GO:0044874">
    <property type="term" value="P:lipoprotein localization to outer membrane"/>
    <property type="evidence" value="ECO:0007669"/>
    <property type="project" value="UniProtKB-UniRule"/>
</dbReference>
<dbReference type="GO" id="GO:0042953">
    <property type="term" value="P:lipoprotein transport"/>
    <property type="evidence" value="ECO:0007669"/>
    <property type="project" value="InterPro"/>
</dbReference>
<dbReference type="CDD" id="cd16325">
    <property type="entry name" value="LolA"/>
    <property type="match status" value="1"/>
</dbReference>
<dbReference type="Gene3D" id="2.50.20.10">
    <property type="entry name" value="Lipoprotein localisation LolA/LolB/LppX"/>
    <property type="match status" value="1"/>
</dbReference>
<dbReference type="HAMAP" id="MF_00240">
    <property type="entry name" value="LolA"/>
    <property type="match status" value="1"/>
</dbReference>
<dbReference type="InterPro" id="IPR029046">
    <property type="entry name" value="LolA/LolB/LppX"/>
</dbReference>
<dbReference type="InterPro" id="IPR004564">
    <property type="entry name" value="OM_lipoprot_carrier_LolA-like"/>
</dbReference>
<dbReference type="InterPro" id="IPR018323">
    <property type="entry name" value="OM_lipoprot_carrier_LolA_Pbac"/>
</dbReference>
<dbReference type="NCBIfam" id="TIGR00547">
    <property type="entry name" value="lolA"/>
    <property type="match status" value="1"/>
</dbReference>
<dbReference type="PANTHER" id="PTHR35869">
    <property type="entry name" value="OUTER-MEMBRANE LIPOPROTEIN CARRIER PROTEIN"/>
    <property type="match status" value="1"/>
</dbReference>
<dbReference type="PANTHER" id="PTHR35869:SF1">
    <property type="entry name" value="OUTER-MEMBRANE LIPOPROTEIN CARRIER PROTEIN"/>
    <property type="match status" value="1"/>
</dbReference>
<dbReference type="Pfam" id="PF03548">
    <property type="entry name" value="LolA"/>
    <property type="match status" value="1"/>
</dbReference>
<dbReference type="SUPFAM" id="SSF89392">
    <property type="entry name" value="Prokaryotic lipoproteins and lipoprotein localization factors"/>
    <property type="match status" value="1"/>
</dbReference>